<accession>A1JJ50</accession>
<sequence length="96" mass="11050">MHVTLVEINVKEDKVEQFVEVFRANHQGSLLEPGNLRFDVLQDESIPTRFYIYEAYVDEAAVAAHKKTPHYLRCVEELEGLMTGPRKKTTFIGLMP</sequence>
<organism>
    <name type="scientific">Yersinia enterocolitica serotype O:8 / biotype 1B (strain NCTC 13174 / 8081)</name>
    <dbReference type="NCBI Taxonomy" id="393305"/>
    <lineage>
        <taxon>Bacteria</taxon>
        <taxon>Pseudomonadati</taxon>
        <taxon>Pseudomonadota</taxon>
        <taxon>Gammaproteobacteria</taxon>
        <taxon>Enterobacterales</taxon>
        <taxon>Yersiniaceae</taxon>
        <taxon>Yersinia</taxon>
    </lineage>
</organism>
<proteinExistence type="inferred from homology"/>
<evidence type="ECO:0000255" key="1">
    <source>
        <dbReference type="HAMAP-Rule" id="MF_02051"/>
    </source>
</evidence>
<feature type="chain" id="PRO_0000351576" description="(4S)-4-hydroxy-5-phosphonooxypentane-2,3-dione isomerase">
    <location>
        <begin position="1"/>
        <end position="96"/>
    </location>
</feature>
<feature type="domain" description="ABM" evidence="1">
    <location>
        <begin position="2"/>
        <end position="91"/>
    </location>
</feature>
<keyword id="KW-0963">Cytoplasm</keyword>
<keyword id="KW-0413">Isomerase</keyword>
<gene>
    <name evidence="1" type="primary">lsrG</name>
    <name type="ordered locus">YE0523</name>
</gene>
<protein>
    <recommendedName>
        <fullName evidence="1">(4S)-4-hydroxy-5-phosphonooxypentane-2,3-dione isomerase</fullName>
        <ecNumber evidence="1">5.3.1.32</ecNumber>
    </recommendedName>
    <alternativeName>
        <fullName evidence="1">Autoinducer 2-degrading protein LsrG</fullName>
        <shortName evidence="1">AI-2-degrading protein LsrG</shortName>
    </alternativeName>
    <alternativeName>
        <fullName evidence="1">Phospho-(S)-4,5-dihydroxy-2,3-pentanedione isomerase</fullName>
    </alternativeName>
    <alternativeName>
        <fullName evidence="1">Phospho-AI-2 isomerase</fullName>
    </alternativeName>
</protein>
<comment type="function">
    <text evidence="1">Involved in the degradation of phospho-AI-2, thereby terminating induction of the lsr operon and closing the AI-2 signaling cycle. Catalyzes the conversion of (4S)-4-hydroxy-5-phosphonooxypentane-2,3-dione (P-DPD) to 3-hydroxy-5-phosphonooxypentane-2,4-dione (P-HPD).</text>
</comment>
<comment type="catalytic activity">
    <reaction evidence="1">
        <text>(2S)-2-hydroxy-3,4-dioxopentyl phosphate = 3-hydroxy-2,4-dioxopentyl phosphate</text>
        <dbReference type="Rhea" id="RHEA:44360"/>
        <dbReference type="ChEBI" id="CHEBI:71677"/>
        <dbReference type="ChEBI" id="CHEBI:84359"/>
        <dbReference type="EC" id="5.3.1.32"/>
    </reaction>
</comment>
<comment type="subunit">
    <text evidence="1">Homodimer.</text>
</comment>
<comment type="subcellular location">
    <subcellularLocation>
        <location evidence="1">Cytoplasm</location>
    </subcellularLocation>
</comment>
<comment type="similarity">
    <text evidence="1">Belongs to the LsrG family.</text>
</comment>
<reference key="1">
    <citation type="journal article" date="2006" name="PLoS Genet.">
        <title>The complete genome sequence and comparative genome analysis of the high pathogenicity Yersinia enterocolitica strain 8081.</title>
        <authorList>
            <person name="Thomson N.R."/>
            <person name="Howard S."/>
            <person name="Wren B.W."/>
            <person name="Holden M.T.G."/>
            <person name="Crossman L."/>
            <person name="Challis G.L."/>
            <person name="Churcher C."/>
            <person name="Mungall K."/>
            <person name="Brooks K."/>
            <person name="Chillingworth T."/>
            <person name="Feltwell T."/>
            <person name="Abdellah Z."/>
            <person name="Hauser H."/>
            <person name="Jagels K."/>
            <person name="Maddison M."/>
            <person name="Moule S."/>
            <person name="Sanders M."/>
            <person name="Whitehead S."/>
            <person name="Quail M.A."/>
            <person name="Dougan G."/>
            <person name="Parkhill J."/>
            <person name="Prentice M.B."/>
        </authorList>
    </citation>
    <scope>NUCLEOTIDE SEQUENCE [LARGE SCALE GENOMIC DNA]</scope>
    <source>
        <strain>NCTC 13174 / 8081</strain>
    </source>
</reference>
<dbReference type="EC" id="5.3.1.32" evidence="1"/>
<dbReference type="EMBL" id="AM286415">
    <property type="protein sequence ID" value="CAL10641.1"/>
    <property type="molecule type" value="Genomic_DNA"/>
</dbReference>
<dbReference type="RefSeq" id="WP_005175221.1">
    <property type="nucleotide sequence ID" value="NC_008800.1"/>
</dbReference>
<dbReference type="RefSeq" id="YP_001004883.1">
    <property type="nucleotide sequence ID" value="NC_008800.1"/>
</dbReference>
<dbReference type="SMR" id="A1JJ50"/>
<dbReference type="KEGG" id="yen:YE0523"/>
<dbReference type="PATRIC" id="fig|393305.7.peg.613"/>
<dbReference type="eggNOG" id="COG1359">
    <property type="taxonomic scope" value="Bacteria"/>
</dbReference>
<dbReference type="HOGENOM" id="CLU_131496_3_0_6"/>
<dbReference type="OrthoDB" id="9812754at2"/>
<dbReference type="Proteomes" id="UP000000642">
    <property type="component" value="Chromosome"/>
</dbReference>
<dbReference type="GO" id="GO:0005829">
    <property type="term" value="C:cytosol"/>
    <property type="evidence" value="ECO:0007669"/>
    <property type="project" value="TreeGrafter"/>
</dbReference>
<dbReference type="GO" id="GO:0002952">
    <property type="term" value="F:(4S)-4-hydroxy-5-phosphonooxypentane-2,3-dione isomerase activity"/>
    <property type="evidence" value="ECO:0007669"/>
    <property type="project" value="UniProtKB-EC"/>
</dbReference>
<dbReference type="GO" id="GO:0016491">
    <property type="term" value="F:oxidoreductase activity"/>
    <property type="evidence" value="ECO:0007669"/>
    <property type="project" value="TreeGrafter"/>
</dbReference>
<dbReference type="FunFam" id="3.30.70.100:FF:000016">
    <property type="entry name" value="(4S)-4-hydroxy-5-phosphonooxypentane-2,3-dione isomerase"/>
    <property type="match status" value="1"/>
</dbReference>
<dbReference type="Gene3D" id="3.30.70.100">
    <property type="match status" value="1"/>
</dbReference>
<dbReference type="HAMAP" id="MF_02051">
    <property type="entry name" value="LsrG"/>
    <property type="match status" value="1"/>
</dbReference>
<dbReference type="InterPro" id="IPR007138">
    <property type="entry name" value="ABM_dom"/>
</dbReference>
<dbReference type="InterPro" id="IPR050744">
    <property type="entry name" value="AI-2_Isomerase_LsrG"/>
</dbReference>
<dbReference type="InterPro" id="IPR011008">
    <property type="entry name" value="Dimeric_a/b-barrel"/>
</dbReference>
<dbReference type="InterPro" id="IPR033672">
    <property type="entry name" value="LsrG"/>
</dbReference>
<dbReference type="NCBIfam" id="NF007791">
    <property type="entry name" value="PRK10486.1"/>
    <property type="match status" value="1"/>
</dbReference>
<dbReference type="PANTHER" id="PTHR33336:SF1">
    <property type="entry name" value="(4S)-4-HYDROXY-5-PHOSPHONOOXYPENTANE-2,3-DIONE ISOMERASE"/>
    <property type="match status" value="1"/>
</dbReference>
<dbReference type="PANTHER" id="PTHR33336">
    <property type="entry name" value="QUINOL MONOOXYGENASE YGIN-RELATED"/>
    <property type="match status" value="1"/>
</dbReference>
<dbReference type="Pfam" id="PF03992">
    <property type="entry name" value="ABM"/>
    <property type="match status" value="1"/>
</dbReference>
<dbReference type="SUPFAM" id="SSF54909">
    <property type="entry name" value="Dimeric alpha+beta barrel"/>
    <property type="match status" value="1"/>
</dbReference>
<dbReference type="PROSITE" id="PS51725">
    <property type="entry name" value="ABM"/>
    <property type="match status" value="1"/>
</dbReference>
<name>LSRG_YERE8</name>